<gene>
    <name evidence="1" type="primary">rlmL</name>
    <name type="ordered locus">Sbal_2570</name>
</gene>
<proteinExistence type="inferred from homology"/>
<reference key="1">
    <citation type="submission" date="2007-02" db="EMBL/GenBank/DDBJ databases">
        <title>Complete sequence of chromosome of Shewanella baltica OS155.</title>
        <authorList>
            <consortium name="US DOE Joint Genome Institute"/>
            <person name="Copeland A."/>
            <person name="Lucas S."/>
            <person name="Lapidus A."/>
            <person name="Barry K."/>
            <person name="Detter J.C."/>
            <person name="Glavina del Rio T."/>
            <person name="Hammon N."/>
            <person name="Israni S."/>
            <person name="Dalin E."/>
            <person name="Tice H."/>
            <person name="Pitluck S."/>
            <person name="Sims D.R."/>
            <person name="Brettin T."/>
            <person name="Bruce D."/>
            <person name="Han C."/>
            <person name="Tapia R."/>
            <person name="Brainard J."/>
            <person name="Schmutz J."/>
            <person name="Larimer F."/>
            <person name="Land M."/>
            <person name="Hauser L."/>
            <person name="Kyrpides N."/>
            <person name="Mikhailova N."/>
            <person name="Brettar I."/>
            <person name="Klappenbach J."/>
            <person name="Konstantinidis K."/>
            <person name="Rodrigues J."/>
            <person name="Tiedje J."/>
            <person name="Richardson P."/>
        </authorList>
    </citation>
    <scope>NUCLEOTIDE SEQUENCE [LARGE SCALE GENOMIC DNA]</scope>
    <source>
        <strain>OS155 / ATCC BAA-1091</strain>
    </source>
</reference>
<dbReference type="EC" id="2.1.1.173" evidence="1"/>
<dbReference type="EC" id="2.1.1.264" evidence="1"/>
<dbReference type="EMBL" id="CP000563">
    <property type="protein sequence ID" value="ABN62063.1"/>
    <property type="molecule type" value="Genomic_DNA"/>
</dbReference>
<dbReference type="RefSeq" id="WP_011847055.1">
    <property type="nucleotide sequence ID" value="NC_009052.1"/>
</dbReference>
<dbReference type="SMR" id="A3D5Q0"/>
<dbReference type="STRING" id="325240.Sbal_2570"/>
<dbReference type="KEGG" id="sbl:Sbal_2570"/>
<dbReference type="HOGENOM" id="CLU_014042_2_0_6"/>
<dbReference type="OrthoDB" id="9809404at2"/>
<dbReference type="Proteomes" id="UP000001557">
    <property type="component" value="Chromosome"/>
</dbReference>
<dbReference type="GO" id="GO:0005737">
    <property type="term" value="C:cytoplasm"/>
    <property type="evidence" value="ECO:0007669"/>
    <property type="project" value="UniProtKB-SubCell"/>
</dbReference>
<dbReference type="GO" id="GO:0052915">
    <property type="term" value="F:23S rRNA (guanine(2445)-N(2))-methyltransferase activity"/>
    <property type="evidence" value="ECO:0007669"/>
    <property type="project" value="UniProtKB-UniRule"/>
</dbReference>
<dbReference type="GO" id="GO:0003723">
    <property type="term" value="F:RNA binding"/>
    <property type="evidence" value="ECO:0007669"/>
    <property type="project" value="UniProtKB-KW"/>
</dbReference>
<dbReference type="GO" id="GO:0070043">
    <property type="term" value="F:rRNA (guanine-N7-)-methyltransferase activity"/>
    <property type="evidence" value="ECO:0007669"/>
    <property type="project" value="UniProtKB-UniRule"/>
</dbReference>
<dbReference type="CDD" id="cd02440">
    <property type="entry name" value="AdoMet_MTases"/>
    <property type="match status" value="2"/>
</dbReference>
<dbReference type="CDD" id="cd11715">
    <property type="entry name" value="THUMP_AdoMetMT"/>
    <property type="match status" value="1"/>
</dbReference>
<dbReference type="FunFam" id="3.40.50.150:FF:000039">
    <property type="entry name" value="Ribosomal RNA large subunit methyltransferase K/L"/>
    <property type="match status" value="1"/>
</dbReference>
<dbReference type="Gene3D" id="3.30.2130.30">
    <property type="match status" value="1"/>
</dbReference>
<dbReference type="Gene3D" id="3.30.750.80">
    <property type="entry name" value="RNA methyltransferase domain (HRMD) like"/>
    <property type="match status" value="1"/>
</dbReference>
<dbReference type="Gene3D" id="3.40.50.150">
    <property type="entry name" value="Vaccinia Virus protein VP39"/>
    <property type="match status" value="2"/>
</dbReference>
<dbReference type="HAMAP" id="MF_01858">
    <property type="entry name" value="23SrRNA_methyltr_KL"/>
    <property type="match status" value="1"/>
</dbReference>
<dbReference type="InterPro" id="IPR017244">
    <property type="entry name" value="23SrRNA_methyltr_KL"/>
</dbReference>
<dbReference type="InterPro" id="IPR002052">
    <property type="entry name" value="DNA_methylase_N6_adenine_CS"/>
</dbReference>
<dbReference type="InterPro" id="IPR000241">
    <property type="entry name" value="RlmKL-like_Mtase"/>
</dbReference>
<dbReference type="InterPro" id="IPR053943">
    <property type="entry name" value="RlmKL-like_Mtase_CS"/>
</dbReference>
<dbReference type="InterPro" id="IPR054170">
    <property type="entry name" value="RlmL_1st"/>
</dbReference>
<dbReference type="InterPro" id="IPR019614">
    <property type="entry name" value="SAM-dep_methyl-trfase"/>
</dbReference>
<dbReference type="InterPro" id="IPR029063">
    <property type="entry name" value="SAM-dependent_MTases_sf"/>
</dbReference>
<dbReference type="InterPro" id="IPR004114">
    <property type="entry name" value="THUMP_dom"/>
</dbReference>
<dbReference type="NCBIfam" id="NF008748">
    <property type="entry name" value="PRK11783.1"/>
    <property type="match status" value="1"/>
</dbReference>
<dbReference type="PANTHER" id="PTHR47313">
    <property type="entry name" value="RIBOSOMAL RNA LARGE SUBUNIT METHYLTRANSFERASE K/L"/>
    <property type="match status" value="1"/>
</dbReference>
<dbReference type="PANTHER" id="PTHR47313:SF1">
    <property type="entry name" value="RIBOSOMAL RNA LARGE SUBUNIT METHYLTRANSFERASE K_L"/>
    <property type="match status" value="1"/>
</dbReference>
<dbReference type="Pfam" id="PF10672">
    <property type="entry name" value="Methyltrans_SAM"/>
    <property type="match status" value="1"/>
</dbReference>
<dbReference type="Pfam" id="PF22020">
    <property type="entry name" value="RlmL_1st"/>
    <property type="match status" value="1"/>
</dbReference>
<dbReference type="Pfam" id="PF02926">
    <property type="entry name" value="THUMP"/>
    <property type="match status" value="1"/>
</dbReference>
<dbReference type="Pfam" id="PF01170">
    <property type="entry name" value="UPF0020"/>
    <property type="match status" value="1"/>
</dbReference>
<dbReference type="PIRSF" id="PIRSF037618">
    <property type="entry name" value="RNA_Mtase_bacteria_prd"/>
    <property type="match status" value="1"/>
</dbReference>
<dbReference type="SMART" id="SM00981">
    <property type="entry name" value="THUMP"/>
    <property type="match status" value="1"/>
</dbReference>
<dbReference type="SUPFAM" id="SSF53335">
    <property type="entry name" value="S-adenosyl-L-methionine-dependent methyltransferases"/>
    <property type="match status" value="2"/>
</dbReference>
<dbReference type="PROSITE" id="PS51165">
    <property type="entry name" value="THUMP"/>
    <property type="match status" value="1"/>
</dbReference>
<dbReference type="PROSITE" id="PS01261">
    <property type="entry name" value="UPF0020"/>
    <property type="match status" value="1"/>
</dbReference>
<sequence length="709" mass="79712">MLNFFAAAPKGFEYSLAQELTEFGATEVKESVAGVYFTASLTLAYRITLWTRLASRIVLVIYKGSCESAEQLYNAAYCVDWPAHFSNKSTFSIDFHGTGGFLNNTQFGALKIKDAIVDRFRDDDIERPNVSRVDAEFKVDAHFRNGVITIAMNFSGPSLHQRGYRSTTGEAPLKENLAANMLVRSGWQASPSTLLDPFCGSGTVLIEAALMAADIAPGLQRSRFGFEHWRRHDKAVWQEIVEEAKARASLGVKRCEIKFYGSDIDSRLVALAKRNAENAGVLELIEFNVADALTIAPPAESGYLITNPPYGERLGNVSELLQLYYQLGDKFKKEFGGWKVAMLCSDIELVSSLKLKADKQMKMFNGALECAFNIYTLHANSTRRDTPVLPDGVDIADIAPAFANRIKKNAKLLEKWAKKEGIDSYRIYDADIPEYNVAVDKYLDYVIIQEYMAPATIPEAVTKRRLSDVLLALPSAIGINPNKMIMKTRERQKGTSQYQKLDERKLELITTEYGAKFKLNLTGYLDTGLFLDHRLTRRLVGQKSKGRRVLNLFSYTGSASVHAALGGAKSVTTVDMSNTYIAWAKDNFALNGLQGKQYEFVQSDCMQWIRDCNEQYDLIFIDPPTFSNSKRMEDSFDVQRDHVNLLSSLVKLLSPTGELVFSNNKRKFKMDIETLTKMNINVTNIDDVTLPMDYKRNPHIHNTWLITHA</sequence>
<evidence type="ECO:0000255" key="1">
    <source>
        <dbReference type="HAMAP-Rule" id="MF_01858"/>
    </source>
</evidence>
<feature type="chain" id="PRO_0000366820" description="Ribosomal RNA large subunit methyltransferase K/L">
    <location>
        <begin position="1"/>
        <end position="709"/>
    </location>
</feature>
<feature type="domain" description="THUMP" evidence="1">
    <location>
        <begin position="43"/>
        <end position="154"/>
    </location>
</feature>
<organism>
    <name type="scientific">Shewanella baltica (strain OS155 / ATCC BAA-1091)</name>
    <dbReference type="NCBI Taxonomy" id="325240"/>
    <lineage>
        <taxon>Bacteria</taxon>
        <taxon>Pseudomonadati</taxon>
        <taxon>Pseudomonadota</taxon>
        <taxon>Gammaproteobacteria</taxon>
        <taxon>Alteromonadales</taxon>
        <taxon>Shewanellaceae</taxon>
        <taxon>Shewanella</taxon>
    </lineage>
</organism>
<keyword id="KW-0963">Cytoplasm</keyword>
<keyword id="KW-0489">Methyltransferase</keyword>
<keyword id="KW-1185">Reference proteome</keyword>
<keyword id="KW-0694">RNA-binding</keyword>
<keyword id="KW-0698">rRNA processing</keyword>
<keyword id="KW-0949">S-adenosyl-L-methionine</keyword>
<keyword id="KW-0808">Transferase</keyword>
<name>RLMKL_SHEB5</name>
<comment type="function">
    <text evidence="1">Specifically methylates the guanine in position 2445 (m2G2445) and the guanine in position 2069 (m7G2069) of 23S rRNA.</text>
</comment>
<comment type="catalytic activity">
    <reaction evidence="1">
        <text>guanosine(2445) in 23S rRNA + S-adenosyl-L-methionine = N(2)-methylguanosine(2445) in 23S rRNA + S-adenosyl-L-homocysteine + H(+)</text>
        <dbReference type="Rhea" id="RHEA:42740"/>
        <dbReference type="Rhea" id="RHEA-COMP:10215"/>
        <dbReference type="Rhea" id="RHEA-COMP:10216"/>
        <dbReference type="ChEBI" id="CHEBI:15378"/>
        <dbReference type="ChEBI" id="CHEBI:57856"/>
        <dbReference type="ChEBI" id="CHEBI:59789"/>
        <dbReference type="ChEBI" id="CHEBI:74269"/>
        <dbReference type="ChEBI" id="CHEBI:74481"/>
        <dbReference type="EC" id="2.1.1.173"/>
    </reaction>
</comment>
<comment type="catalytic activity">
    <reaction evidence="1">
        <text>guanosine(2069) in 23S rRNA + S-adenosyl-L-methionine = N(2)-methylguanosine(2069) in 23S rRNA + S-adenosyl-L-homocysteine + H(+)</text>
        <dbReference type="Rhea" id="RHEA:43772"/>
        <dbReference type="Rhea" id="RHEA-COMP:10688"/>
        <dbReference type="Rhea" id="RHEA-COMP:10689"/>
        <dbReference type="ChEBI" id="CHEBI:15378"/>
        <dbReference type="ChEBI" id="CHEBI:57856"/>
        <dbReference type="ChEBI" id="CHEBI:59789"/>
        <dbReference type="ChEBI" id="CHEBI:74269"/>
        <dbReference type="ChEBI" id="CHEBI:74481"/>
        <dbReference type="EC" id="2.1.1.264"/>
    </reaction>
</comment>
<comment type="subcellular location">
    <subcellularLocation>
        <location evidence="1">Cytoplasm</location>
    </subcellularLocation>
</comment>
<comment type="similarity">
    <text evidence="1">Belongs to the methyltransferase superfamily. RlmKL family.</text>
</comment>
<protein>
    <recommendedName>
        <fullName evidence="1">Ribosomal RNA large subunit methyltransferase K/L</fullName>
    </recommendedName>
    <domain>
        <recommendedName>
            <fullName evidence="1">23S rRNA m2G2445 methyltransferase</fullName>
            <ecNumber evidence="1">2.1.1.173</ecNumber>
        </recommendedName>
        <alternativeName>
            <fullName evidence="1">rRNA (guanine-N(2)-)-methyltransferase RlmL</fullName>
        </alternativeName>
    </domain>
    <domain>
        <recommendedName>
            <fullName evidence="1">23S rRNA m7G2069 methyltransferase</fullName>
            <ecNumber evidence="1">2.1.1.264</ecNumber>
        </recommendedName>
        <alternativeName>
            <fullName evidence="1">rRNA (guanine-N(7)-)-methyltransferase RlmK</fullName>
        </alternativeName>
    </domain>
</protein>
<accession>A3D5Q0</accession>